<proteinExistence type="inferred from homology"/>
<reference key="1">
    <citation type="submission" date="2008-02" db="EMBL/GenBank/DDBJ databases">
        <title>Complete sequence of chromosome of Methylobacterium sp. 4-46.</title>
        <authorList>
            <consortium name="US DOE Joint Genome Institute"/>
            <person name="Copeland A."/>
            <person name="Lucas S."/>
            <person name="Lapidus A."/>
            <person name="Glavina del Rio T."/>
            <person name="Dalin E."/>
            <person name="Tice H."/>
            <person name="Bruce D."/>
            <person name="Goodwin L."/>
            <person name="Pitluck S."/>
            <person name="Chertkov O."/>
            <person name="Brettin T."/>
            <person name="Detter J.C."/>
            <person name="Han C."/>
            <person name="Kuske C.R."/>
            <person name="Schmutz J."/>
            <person name="Larimer F."/>
            <person name="Land M."/>
            <person name="Hauser L."/>
            <person name="Kyrpides N."/>
            <person name="Ivanova N."/>
            <person name="Marx C.J."/>
            <person name="Richardson P."/>
        </authorList>
    </citation>
    <scope>NUCLEOTIDE SEQUENCE [LARGE SCALE GENOMIC DNA]</scope>
    <source>
        <strain>4-46</strain>
    </source>
</reference>
<organism>
    <name type="scientific">Methylobacterium sp. (strain 4-46)</name>
    <dbReference type="NCBI Taxonomy" id="426117"/>
    <lineage>
        <taxon>Bacteria</taxon>
        <taxon>Pseudomonadati</taxon>
        <taxon>Pseudomonadota</taxon>
        <taxon>Alphaproteobacteria</taxon>
        <taxon>Hyphomicrobiales</taxon>
        <taxon>Methylobacteriaceae</taxon>
        <taxon>Methylobacterium</taxon>
    </lineage>
</organism>
<protein>
    <recommendedName>
        <fullName evidence="1">Orotate phosphoribosyltransferase</fullName>
        <shortName evidence="1">OPRT</shortName>
        <shortName evidence="1">OPRTase</shortName>
        <ecNumber evidence="1">2.4.2.10</ecNumber>
    </recommendedName>
</protein>
<dbReference type="EC" id="2.4.2.10" evidence="1"/>
<dbReference type="EMBL" id="CP000943">
    <property type="protein sequence ID" value="ACA14620.1"/>
    <property type="molecule type" value="Genomic_DNA"/>
</dbReference>
<dbReference type="RefSeq" id="WP_012330038.1">
    <property type="nucleotide sequence ID" value="NC_010511.1"/>
</dbReference>
<dbReference type="SMR" id="B0UN77"/>
<dbReference type="STRING" id="426117.M446_0032"/>
<dbReference type="KEGG" id="met:M446_0032"/>
<dbReference type="eggNOG" id="COG0461">
    <property type="taxonomic scope" value="Bacteria"/>
</dbReference>
<dbReference type="HOGENOM" id="CLU_074878_3_0_5"/>
<dbReference type="UniPathway" id="UPA00070">
    <property type="reaction ID" value="UER00119"/>
</dbReference>
<dbReference type="GO" id="GO:0000287">
    <property type="term" value="F:magnesium ion binding"/>
    <property type="evidence" value="ECO:0007669"/>
    <property type="project" value="UniProtKB-UniRule"/>
</dbReference>
<dbReference type="GO" id="GO:0004588">
    <property type="term" value="F:orotate phosphoribosyltransferase activity"/>
    <property type="evidence" value="ECO:0007669"/>
    <property type="project" value="UniProtKB-UniRule"/>
</dbReference>
<dbReference type="GO" id="GO:0044205">
    <property type="term" value="P:'de novo' UMP biosynthetic process"/>
    <property type="evidence" value="ECO:0007669"/>
    <property type="project" value="UniProtKB-UniRule"/>
</dbReference>
<dbReference type="GO" id="GO:0019856">
    <property type="term" value="P:pyrimidine nucleobase biosynthetic process"/>
    <property type="evidence" value="ECO:0007669"/>
    <property type="project" value="InterPro"/>
</dbReference>
<dbReference type="CDD" id="cd06223">
    <property type="entry name" value="PRTases_typeI"/>
    <property type="match status" value="1"/>
</dbReference>
<dbReference type="Gene3D" id="3.40.50.2020">
    <property type="match status" value="1"/>
</dbReference>
<dbReference type="HAMAP" id="MF_01208">
    <property type="entry name" value="PyrE"/>
    <property type="match status" value="1"/>
</dbReference>
<dbReference type="InterPro" id="IPR023031">
    <property type="entry name" value="OPRT"/>
</dbReference>
<dbReference type="InterPro" id="IPR006273">
    <property type="entry name" value="Orotate_PRibTrfase_bac"/>
</dbReference>
<dbReference type="InterPro" id="IPR000836">
    <property type="entry name" value="PRibTrfase_dom"/>
</dbReference>
<dbReference type="InterPro" id="IPR029057">
    <property type="entry name" value="PRTase-like"/>
</dbReference>
<dbReference type="NCBIfam" id="TIGR01367">
    <property type="entry name" value="pyrE_Therm"/>
    <property type="match status" value="1"/>
</dbReference>
<dbReference type="PANTHER" id="PTHR19278">
    <property type="entry name" value="OROTATE PHOSPHORIBOSYLTRANSFERASE"/>
    <property type="match status" value="1"/>
</dbReference>
<dbReference type="PANTHER" id="PTHR19278:SF9">
    <property type="entry name" value="URIDINE 5'-MONOPHOSPHATE SYNTHASE"/>
    <property type="match status" value="1"/>
</dbReference>
<dbReference type="Pfam" id="PF00156">
    <property type="entry name" value="Pribosyltran"/>
    <property type="match status" value="1"/>
</dbReference>
<dbReference type="SUPFAM" id="SSF53271">
    <property type="entry name" value="PRTase-like"/>
    <property type="match status" value="1"/>
</dbReference>
<dbReference type="PROSITE" id="PS00103">
    <property type="entry name" value="PUR_PYR_PR_TRANSFER"/>
    <property type="match status" value="1"/>
</dbReference>
<sequence>MTPDDLLEEFRAAGALLEGHFILSSGLHSAVFLQKMAIFSDPVRTARVCAGLASVIRDRYGAVDLVVSPAIGGIVPGYETARALGARAIFVERDPGGPFQLRRGFSIPAGSRAVMVEDIVTTGLSSRECLAALRDQPGEVVGAACLIDRSGGRADLGAPLVALATLDIPNYPADQLPPDLAAIPAVKPGSRATTPG</sequence>
<feature type="chain" id="PRO_1000138807" description="Orotate phosphoribosyltransferase">
    <location>
        <begin position="1"/>
        <end position="196"/>
    </location>
</feature>
<feature type="binding site" evidence="1">
    <location>
        <begin position="117"/>
        <end position="125"/>
    </location>
    <ligand>
        <name>5-phospho-alpha-D-ribose 1-diphosphate</name>
        <dbReference type="ChEBI" id="CHEBI:58017"/>
    </ligand>
</feature>
<feature type="binding site" evidence="1">
    <location>
        <position position="121"/>
    </location>
    <ligand>
        <name>orotate</name>
        <dbReference type="ChEBI" id="CHEBI:30839"/>
    </ligand>
</feature>
<feature type="binding site" evidence="1">
    <location>
        <position position="149"/>
    </location>
    <ligand>
        <name>orotate</name>
        <dbReference type="ChEBI" id="CHEBI:30839"/>
    </ligand>
</feature>
<gene>
    <name evidence="1" type="primary">pyrE</name>
    <name type="ordered locus">M446_0032</name>
</gene>
<accession>B0UN77</accession>
<name>PYRE_METS4</name>
<comment type="function">
    <text evidence="1">Catalyzes the transfer of a ribosyl phosphate group from 5-phosphoribose 1-diphosphate to orotate, leading to the formation of orotidine monophosphate (OMP).</text>
</comment>
<comment type="catalytic activity">
    <reaction evidence="1">
        <text>orotidine 5'-phosphate + diphosphate = orotate + 5-phospho-alpha-D-ribose 1-diphosphate</text>
        <dbReference type="Rhea" id="RHEA:10380"/>
        <dbReference type="ChEBI" id="CHEBI:30839"/>
        <dbReference type="ChEBI" id="CHEBI:33019"/>
        <dbReference type="ChEBI" id="CHEBI:57538"/>
        <dbReference type="ChEBI" id="CHEBI:58017"/>
        <dbReference type="EC" id="2.4.2.10"/>
    </reaction>
</comment>
<comment type="cofactor">
    <cofactor evidence="1">
        <name>Mg(2+)</name>
        <dbReference type="ChEBI" id="CHEBI:18420"/>
    </cofactor>
</comment>
<comment type="pathway">
    <text evidence="1">Pyrimidine metabolism; UMP biosynthesis via de novo pathway; UMP from orotate: step 1/2.</text>
</comment>
<comment type="subunit">
    <text evidence="1">Homodimer.</text>
</comment>
<comment type="similarity">
    <text evidence="1">Belongs to the purine/pyrimidine phosphoribosyltransferase family. PyrE subfamily.</text>
</comment>
<evidence type="ECO:0000255" key="1">
    <source>
        <dbReference type="HAMAP-Rule" id="MF_01208"/>
    </source>
</evidence>
<keyword id="KW-0328">Glycosyltransferase</keyword>
<keyword id="KW-0460">Magnesium</keyword>
<keyword id="KW-0665">Pyrimidine biosynthesis</keyword>
<keyword id="KW-0808">Transferase</keyword>